<accession>Q47UN7</accession>
<reference key="1">
    <citation type="journal article" date="2005" name="Proc. Natl. Acad. Sci. U.S.A.">
        <title>The psychrophilic lifestyle as revealed by the genome sequence of Colwellia psychrerythraea 34H through genomic and proteomic analyses.</title>
        <authorList>
            <person name="Methe B.A."/>
            <person name="Nelson K.E."/>
            <person name="Deming J.W."/>
            <person name="Momen B."/>
            <person name="Melamud E."/>
            <person name="Zhang X."/>
            <person name="Moult J."/>
            <person name="Madupu R."/>
            <person name="Nelson W.C."/>
            <person name="Dodson R.J."/>
            <person name="Brinkac L.M."/>
            <person name="Daugherty S.C."/>
            <person name="Durkin A.S."/>
            <person name="DeBoy R.T."/>
            <person name="Kolonay J.F."/>
            <person name="Sullivan S.A."/>
            <person name="Zhou L."/>
            <person name="Davidsen T.M."/>
            <person name="Wu M."/>
            <person name="Huston A.L."/>
            <person name="Lewis M."/>
            <person name="Weaver B."/>
            <person name="Weidman J.F."/>
            <person name="Khouri H."/>
            <person name="Utterback T.R."/>
            <person name="Feldblyum T.V."/>
            <person name="Fraser C.M."/>
        </authorList>
    </citation>
    <scope>NUCLEOTIDE SEQUENCE [LARGE SCALE GENOMIC DNA]</scope>
    <source>
        <strain>34H / ATCC BAA-681</strain>
    </source>
</reference>
<comment type="function">
    <text evidence="1">Functions in the biosynthesis of branched-chain amino acids. Catalyzes the dehydration of (2R,3R)-2,3-dihydroxy-3-methylpentanoate (2,3-dihydroxy-3-methylvalerate) into 2-oxo-3-methylpentanoate (2-oxo-3-methylvalerate) and of (2R)-2,3-dihydroxy-3-methylbutanoate (2,3-dihydroxyisovalerate) into 2-oxo-3-methylbutanoate (2-oxoisovalerate), the penultimate precursor to L-isoleucine and L-valine, respectively.</text>
</comment>
<comment type="catalytic activity">
    <reaction evidence="1">
        <text>(2R)-2,3-dihydroxy-3-methylbutanoate = 3-methyl-2-oxobutanoate + H2O</text>
        <dbReference type="Rhea" id="RHEA:24809"/>
        <dbReference type="ChEBI" id="CHEBI:11851"/>
        <dbReference type="ChEBI" id="CHEBI:15377"/>
        <dbReference type="ChEBI" id="CHEBI:49072"/>
        <dbReference type="EC" id="4.2.1.9"/>
    </reaction>
    <physiologicalReaction direction="left-to-right" evidence="1">
        <dbReference type="Rhea" id="RHEA:24810"/>
    </physiologicalReaction>
</comment>
<comment type="catalytic activity">
    <reaction evidence="1">
        <text>(2R,3R)-2,3-dihydroxy-3-methylpentanoate = (S)-3-methyl-2-oxopentanoate + H2O</text>
        <dbReference type="Rhea" id="RHEA:27694"/>
        <dbReference type="ChEBI" id="CHEBI:15377"/>
        <dbReference type="ChEBI" id="CHEBI:35146"/>
        <dbReference type="ChEBI" id="CHEBI:49258"/>
        <dbReference type="EC" id="4.2.1.9"/>
    </reaction>
    <physiologicalReaction direction="left-to-right" evidence="1">
        <dbReference type="Rhea" id="RHEA:27695"/>
    </physiologicalReaction>
</comment>
<comment type="cofactor">
    <cofactor evidence="1">
        <name>[2Fe-2S] cluster</name>
        <dbReference type="ChEBI" id="CHEBI:190135"/>
    </cofactor>
    <text evidence="1">Binds 1 [2Fe-2S] cluster per subunit. This cluster acts as a Lewis acid cofactor.</text>
</comment>
<comment type="cofactor">
    <cofactor evidence="1">
        <name>Mg(2+)</name>
        <dbReference type="ChEBI" id="CHEBI:18420"/>
    </cofactor>
</comment>
<comment type="pathway">
    <text evidence="1">Amino-acid biosynthesis; L-isoleucine biosynthesis; L-isoleucine from 2-oxobutanoate: step 3/4.</text>
</comment>
<comment type="pathway">
    <text evidence="1">Amino-acid biosynthesis; L-valine biosynthesis; L-valine from pyruvate: step 3/4.</text>
</comment>
<comment type="subunit">
    <text evidence="1">Homodimer.</text>
</comment>
<comment type="similarity">
    <text evidence="1">Belongs to the IlvD/Edd family.</text>
</comment>
<keyword id="KW-0001">2Fe-2S</keyword>
<keyword id="KW-0028">Amino-acid biosynthesis</keyword>
<keyword id="KW-0100">Branched-chain amino acid biosynthesis</keyword>
<keyword id="KW-0408">Iron</keyword>
<keyword id="KW-0411">Iron-sulfur</keyword>
<keyword id="KW-0456">Lyase</keyword>
<keyword id="KW-0460">Magnesium</keyword>
<keyword id="KW-0479">Metal-binding</keyword>
<proteinExistence type="inferred from homology"/>
<feature type="chain" id="PRO_0000225383" description="Dihydroxy-acid dehydratase">
    <location>
        <begin position="1"/>
        <end position="620"/>
    </location>
</feature>
<feature type="active site" description="Proton acceptor" evidence="1">
    <location>
        <position position="517"/>
    </location>
</feature>
<feature type="binding site" evidence="1">
    <location>
        <position position="81"/>
    </location>
    <ligand>
        <name>Mg(2+)</name>
        <dbReference type="ChEBI" id="CHEBI:18420"/>
    </ligand>
</feature>
<feature type="binding site" evidence="1">
    <location>
        <position position="122"/>
    </location>
    <ligand>
        <name>[2Fe-2S] cluster</name>
        <dbReference type="ChEBI" id="CHEBI:190135"/>
    </ligand>
</feature>
<feature type="binding site" evidence="1">
    <location>
        <position position="123"/>
    </location>
    <ligand>
        <name>Mg(2+)</name>
        <dbReference type="ChEBI" id="CHEBI:18420"/>
    </ligand>
</feature>
<feature type="binding site" description="via carbamate group" evidence="1">
    <location>
        <position position="124"/>
    </location>
    <ligand>
        <name>Mg(2+)</name>
        <dbReference type="ChEBI" id="CHEBI:18420"/>
    </ligand>
</feature>
<feature type="binding site" evidence="1">
    <location>
        <position position="195"/>
    </location>
    <ligand>
        <name>[2Fe-2S] cluster</name>
        <dbReference type="ChEBI" id="CHEBI:190135"/>
    </ligand>
</feature>
<feature type="binding site" evidence="1">
    <location>
        <position position="491"/>
    </location>
    <ligand>
        <name>Mg(2+)</name>
        <dbReference type="ChEBI" id="CHEBI:18420"/>
    </ligand>
</feature>
<feature type="modified residue" description="N6-carboxylysine" evidence="1">
    <location>
        <position position="124"/>
    </location>
</feature>
<organism>
    <name type="scientific">Colwellia psychrerythraea (strain 34H / ATCC BAA-681)</name>
    <name type="common">Vibrio psychroerythus</name>
    <dbReference type="NCBI Taxonomy" id="167879"/>
    <lineage>
        <taxon>Bacteria</taxon>
        <taxon>Pseudomonadati</taxon>
        <taxon>Pseudomonadota</taxon>
        <taxon>Gammaproteobacteria</taxon>
        <taxon>Alteromonadales</taxon>
        <taxon>Colwelliaceae</taxon>
        <taxon>Colwellia</taxon>
    </lineage>
</organism>
<evidence type="ECO:0000255" key="1">
    <source>
        <dbReference type="HAMAP-Rule" id="MF_00012"/>
    </source>
</evidence>
<gene>
    <name evidence="1" type="primary">ilvD</name>
    <name type="ordered locus">CPS_4846</name>
</gene>
<name>ILVD_COLP3</name>
<protein>
    <recommendedName>
        <fullName evidence="1">Dihydroxy-acid dehydratase</fullName>
        <shortName evidence="1">DAD</shortName>
        <ecNumber evidence="1">4.2.1.9</ecNumber>
    </recommendedName>
</protein>
<dbReference type="EC" id="4.2.1.9" evidence="1"/>
<dbReference type="EMBL" id="CP000083">
    <property type="protein sequence ID" value="AAZ28474.1"/>
    <property type="molecule type" value="Genomic_DNA"/>
</dbReference>
<dbReference type="RefSeq" id="WP_011045565.1">
    <property type="nucleotide sequence ID" value="NC_003910.7"/>
</dbReference>
<dbReference type="SMR" id="Q47UN7"/>
<dbReference type="STRING" id="167879.CPS_4846"/>
<dbReference type="KEGG" id="cps:CPS_4846"/>
<dbReference type="eggNOG" id="COG0129">
    <property type="taxonomic scope" value="Bacteria"/>
</dbReference>
<dbReference type="HOGENOM" id="CLU_014271_4_3_6"/>
<dbReference type="UniPathway" id="UPA00047">
    <property type="reaction ID" value="UER00057"/>
</dbReference>
<dbReference type="UniPathway" id="UPA00049">
    <property type="reaction ID" value="UER00061"/>
</dbReference>
<dbReference type="Proteomes" id="UP000000547">
    <property type="component" value="Chromosome"/>
</dbReference>
<dbReference type="GO" id="GO:0005829">
    <property type="term" value="C:cytosol"/>
    <property type="evidence" value="ECO:0007669"/>
    <property type="project" value="TreeGrafter"/>
</dbReference>
<dbReference type="GO" id="GO:0051537">
    <property type="term" value="F:2 iron, 2 sulfur cluster binding"/>
    <property type="evidence" value="ECO:0007669"/>
    <property type="project" value="UniProtKB-UniRule"/>
</dbReference>
<dbReference type="GO" id="GO:0004160">
    <property type="term" value="F:dihydroxy-acid dehydratase activity"/>
    <property type="evidence" value="ECO:0007669"/>
    <property type="project" value="UniProtKB-UniRule"/>
</dbReference>
<dbReference type="GO" id="GO:0000287">
    <property type="term" value="F:magnesium ion binding"/>
    <property type="evidence" value="ECO:0007669"/>
    <property type="project" value="UniProtKB-UniRule"/>
</dbReference>
<dbReference type="GO" id="GO:0009097">
    <property type="term" value="P:isoleucine biosynthetic process"/>
    <property type="evidence" value="ECO:0007669"/>
    <property type="project" value="UniProtKB-UniRule"/>
</dbReference>
<dbReference type="GO" id="GO:0009099">
    <property type="term" value="P:L-valine biosynthetic process"/>
    <property type="evidence" value="ECO:0007669"/>
    <property type="project" value="UniProtKB-UniRule"/>
</dbReference>
<dbReference type="FunFam" id="3.50.30.80:FF:000001">
    <property type="entry name" value="Dihydroxy-acid dehydratase"/>
    <property type="match status" value="1"/>
</dbReference>
<dbReference type="Gene3D" id="3.50.30.80">
    <property type="entry name" value="IlvD/EDD C-terminal domain-like"/>
    <property type="match status" value="1"/>
</dbReference>
<dbReference type="HAMAP" id="MF_00012">
    <property type="entry name" value="IlvD"/>
    <property type="match status" value="1"/>
</dbReference>
<dbReference type="InterPro" id="IPR042096">
    <property type="entry name" value="Dihydro-acid_dehy_C"/>
</dbReference>
<dbReference type="InterPro" id="IPR004404">
    <property type="entry name" value="DihydroxyA_deHydtase"/>
</dbReference>
<dbReference type="InterPro" id="IPR020558">
    <property type="entry name" value="DiOHA_6PGluconate_deHydtase_CS"/>
</dbReference>
<dbReference type="InterPro" id="IPR056740">
    <property type="entry name" value="ILV_EDD_C"/>
</dbReference>
<dbReference type="InterPro" id="IPR000581">
    <property type="entry name" value="ILV_EDD_N"/>
</dbReference>
<dbReference type="InterPro" id="IPR037237">
    <property type="entry name" value="IlvD/EDD_N"/>
</dbReference>
<dbReference type="NCBIfam" id="TIGR00110">
    <property type="entry name" value="ilvD"/>
    <property type="match status" value="1"/>
</dbReference>
<dbReference type="NCBIfam" id="NF009103">
    <property type="entry name" value="PRK12448.1"/>
    <property type="match status" value="1"/>
</dbReference>
<dbReference type="PANTHER" id="PTHR43661">
    <property type="entry name" value="D-XYLONATE DEHYDRATASE"/>
    <property type="match status" value="1"/>
</dbReference>
<dbReference type="PANTHER" id="PTHR43661:SF3">
    <property type="entry name" value="D-XYLONATE DEHYDRATASE YAGF-RELATED"/>
    <property type="match status" value="1"/>
</dbReference>
<dbReference type="Pfam" id="PF24877">
    <property type="entry name" value="ILV_EDD_C"/>
    <property type="match status" value="1"/>
</dbReference>
<dbReference type="Pfam" id="PF00920">
    <property type="entry name" value="ILVD_EDD_N"/>
    <property type="match status" value="1"/>
</dbReference>
<dbReference type="SUPFAM" id="SSF143975">
    <property type="entry name" value="IlvD/EDD N-terminal domain-like"/>
    <property type="match status" value="1"/>
</dbReference>
<dbReference type="SUPFAM" id="SSF52016">
    <property type="entry name" value="LeuD/IlvD-like"/>
    <property type="match status" value="1"/>
</dbReference>
<dbReference type="PROSITE" id="PS00886">
    <property type="entry name" value="ILVD_EDD_1"/>
    <property type="match status" value="1"/>
</dbReference>
<dbReference type="PROSITE" id="PS00887">
    <property type="entry name" value="ILVD_EDD_2"/>
    <property type="match status" value="1"/>
</dbReference>
<sequence length="620" mass="66044">MPKLRSATSTQGRNMAGARALWRATGMTDGDFGKPIIAVVNSFTQFVPGHVHLKDMGQLVAGAIEEAGGVAKEFNTIAVDDGIAMGHSGMLYSLPSRDLIADSVEYMVNAHCADAMVCISNCDKITPGMMMAAMRLNIPVIFVSGGPMEAGKTKLSDQIIKLDLVDAMIKGADPTVSDEDSDKIERSACPTCGSCSGMFTANSMNCLAEALGLALPGNGSMLATHADREQLFLKAGKQIVELTKRYYQDNDESALPRNIACKEALHNAMCLDIAMGGSTNTILHLLATAQEAEIDYTMEDMDKLSRIVPQLCKVAPSTPEYHMEDVHRAGGVISILGELSRAGLLKTDVPNVLGTTLADVIAKYDITLTDDEDIKKFYRAGPAGIRTTKAFSQDCRWDTLDDDRVNGCIRNLENAFSLEGGLAVLSGNIAVDGCVVKTAGVSDDNLVFTGPAHIFESQDDAVAGVLDGKVVAGEVVVIRYEGPKGGPGMQEMLYPTTYLKSMGLGKACALLTDGRFSGGTSGLSIGHVSPEAADGGTIALVEQGDIIHIDIPTREITLQVSEEVLEERRAAMISKGKQAWKPADRVRPISYALKNYAMLATSADKGAVRNRDLLDGLVDK</sequence>